<reference key="1">
    <citation type="journal article" date="1988" name="Cell">
        <title>The sqt-1 gene of C. elegans encodes a collagen critical for organismal morphogenesis.</title>
        <authorList>
            <person name="Kramer J.M."/>
            <person name="Johnson J.J."/>
            <person name="Edgar R.S."/>
            <person name="Basch C."/>
            <person name="Roberts S."/>
        </authorList>
    </citation>
    <scope>NUCLEOTIDE SEQUENCE [GENOMIC DNA]</scope>
    <source>
        <strain>Bristol N2</strain>
    </source>
</reference>
<reference key="2">
    <citation type="journal article" date="1998" name="Science">
        <title>Genome sequence of the nematode C. elegans: a platform for investigating biology.</title>
        <authorList>
            <consortium name="The C. elegans sequencing consortium"/>
        </authorList>
    </citation>
    <scope>NUCLEOTIDE SEQUENCE [LARGE SCALE GENOMIC DNA]</scope>
    <source>
        <strain>Bristol N2</strain>
    </source>
</reference>
<accession>P12114</accession>
<accession>Q17509</accession>
<organism>
    <name type="scientific">Caenorhabditis elegans</name>
    <dbReference type="NCBI Taxonomy" id="6239"/>
    <lineage>
        <taxon>Eukaryota</taxon>
        <taxon>Metazoa</taxon>
        <taxon>Ecdysozoa</taxon>
        <taxon>Nematoda</taxon>
        <taxon>Chromadorea</taxon>
        <taxon>Rhabditida</taxon>
        <taxon>Rhabditina</taxon>
        <taxon>Rhabditomorpha</taxon>
        <taxon>Rhabditoidea</taxon>
        <taxon>Rhabditidae</taxon>
        <taxon>Peloderinae</taxon>
        <taxon>Caenorhabditis</taxon>
    </lineage>
</organism>
<gene>
    <name type="primary">sqt-1</name>
    <name type="synonym">rol-5</name>
    <name type="ORF">B0491.2</name>
</gene>
<feature type="chain" id="PRO_0000127596" description="Cuticle collagen sqt-1">
    <location>
        <begin position="1"/>
        <end position="324"/>
    </location>
</feature>
<feature type="region of interest" description="Disordered" evidence="1">
    <location>
        <begin position="68"/>
        <end position="108"/>
    </location>
</feature>
<feature type="region of interest" description="Triple-helical region">
    <location>
        <begin position="127"/>
        <end position="153"/>
    </location>
</feature>
<feature type="region of interest" description="Disordered" evidence="1">
    <location>
        <begin position="129"/>
        <end position="324"/>
    </location>
</feature>
<feature type="region of interest" description="Triple-helical region">
    <location>
        <begin position="171"/>
        <end position="231"/>
    </location>
</feature>
<feature type="region of interest" description="Triple-helical region">
    <location>
        <begin position="237"/>
        <end position="299"/>
    </location>
</feature>
<feature type="compositionally biased region" description="Pro residues" evidence="1">
    <location>
        <begin position="87"/>
        <end position="97"/>
    </location>
</feature>
<feature type="compositionally biased region" description="Low complexity" evidence="1">
    <location>
        <begin position="129"/>
        <end position="156"/>
    </location>
</feature>
<feature type="compositionally biased region" description="Low complexity" evidence="1">
    <location>
        <begin position="177"/>
        <end position="201"/>
    </location>
</feature>
<feature type="compositionally biased region" description="Basic and acidic residues" evidence="1">
    <location>
        <begin position="227"/>
        <end position="236"/>
    </location>
</feature>
<feature type="sequence conflict" description="In Ref. 1; AAA65468." evidence="2" ref="1">
    <original>A</original>
    <variation>V</variation>
    <location>
        <position position="158"/>
    </location>
</feature>
<feature type="sequence conflict" description="In Ref. 1; AAA65468." evidence="2" ref="1">
    <original>R</original>
    <variation>G</variation>
    <location>
        <position position="238"/>
    </location>
</feature>
<evidence type="ECO:0000256" key="1">
    <source>
        <dbReference type="SAM" id="MobiDB-lite"/>
    </source>
</evidence>
<evidence type="ECO:0000305" key="2"/>
<sequence length="324" mass="32850">MSVKLACYVTASVTVATLMVCFMTMSTIYSEVDGFREKLDTEMNVFRQSTNGLWKDIVVIGRSSKRVRRQYEETNATPTPHADGSPSAPPGQPPAVPPVFNQPKTPNGANGNGPTCNCNADNKCPAGPSGPKGVPGVPGLDGVPGLDGVPGVGADDIAPQRESVGCFTCPQGPVGPPGALGRPGPRGLPGPRGQNGNPGRDGQPGHPGEQGSSGQIGKIGEPGPPGEKGRDAEHPIGRPGPKGPRGDQGPTGPAGQNGLHGPPGEPGTVGPEGPSGKQGRQGPDGTQGETGPDGRPGKDAEYCQCPDKSPPSEAVNANRGYRNI</sequence>
<name>SQT1_CAEEL</name>
<proteinExistence type="inferred from homology"/>
<dbReference type="EMBL" id="J03146">
    <property type="protein sequence ID" value="AAA65468.1"/>
    <property type="molecule type" value="Genomic_DNA"/>
</dbReference>
<dbReference type="EMBL" id="Z49907">
    <property type="protein sequence ID" value="CAA90084.1"/>
    <property type="molecule type" value="Genomic_DNA"/>
</dbReference>
<dbReference type="PIR" id="A31920">
    <property type="entry name" value="A31920"/>
</dbReference>
<dbReference type="PIR" id="T18763">
    <property type="entry name" value="T18763"/>
</dbReference>
<dbReference type="RefSeq" id="NP_001369874.1">
    <property type="nucleotide sequence ID" value="NM_001383951.2"/>
</dbReference>
<dbReference type="RefSeq" id="NP_496421.1">
    <property type="nucleotide sequence ID" value="NM_064020.5"/>
</dbReference>
<dbReference type="SMR" id="P12114"/>
<dbReference type="BioGRID" id="40038">
    <property type="interactions" value="2"/>
</dbReference>
<dbReference type="FunCoup" id="P12114">
    <property type="interactions" value="87"/>
</dbReference>
<dbReference type="IntAct" id="P12114">
    <property type="interactions" value="1"/>
</dbReference>
<dbReference type="STRING" id="6239.B0491.2.1"/>
<dbReference type="PaxDb" id="6239-B0491.2.1"/>
<dbReference type="PeptideAtlas" id="P12114"/>
<dbReference type="EnsemblMetazoa" id="B0491.2.1">
    <property type="protein sequence ID" value="B0491.2.1"/>
    <property type="gene ID" value="WBGene00005016"/>
</dbReference>
<dbReference type="EnsemblMetazoa" id="B0491.2.2">
    <property type="protein sequence ID" value="B0491.2.2"/>
    <property type="gene ID" value="WBGene00005016"/>
</dbReference>
<dbReference type="GeneID" id="174731"/>
<dbReference type="UCSC" id="B0491.2.1">
    <property type="organism name" value="c. elegans"/>
</dbReference>
<dbReference type="AGR" id="WB:WBGene00005016"/>
<dbReference type="WormBase" id="B0491.2">
    <property type="protein sequence ID" value="CE02104"/>
    <property type="gene ID" value="WBGene00005016"/>
    <property type="gene designation" value="sqt-1"/>
</dbReference>
<dbReference type="eggNOG" id="KOG3544">
    <property type="taxonomic scope" value="Eukaryota"/>
</dbReference>
<dbReference type="HOGENOM" id="CLU_001074_4_4_1"/>
<dbReference type="InParanoid" id="P12114"/>
<dbReference type="OMA" id="EHPIGRP"/>
<dbReference type="OrthoDB" id="8939548at2759"/>
<dbReference type="PhylomeDB" id="P12114"/>
<dbReference type="PRO" id="PR:P12114"/>
<dbReference type="Proteomes" id="UP000001940">
    <property type="component" value="Chromosome II"/>
</dbReference>
<dbReference type="Bgee" id="WBGene00005016">
    <property type="expression patterns" value="Expressed in larva and 2 other cell types or tissues"/>
</dbReference>
<dbReference type="GO" id="GO:0005581">
    <property type="term" value="C:collagen trimer"/>
    <property type="evidence" value="ECO:0007669"/>
    <property type="project" value="UniProtKB-KW"/>
</dbReference>
<dbReference type="GO" id="GO:0042329">
    <property type="term" value="F:structural constituent of collagen and cuticulin-based cuticle"/>
    <property type="evidence" value="ECO:0000315"/>
    <property type="project" value="WormBase"/>
</dbReference>
<dbReference type="GO" id="GO:0040002">
    <property type="term" value="P:collagen and cuticulin-based cuticle development"/>
    <property type="evidence" value="ECO:0000315"/>
    <property type="project" value="WormBase"/>
</dbReference>
<dbReference type="GO" id="GO:0042338">
    <property type="term" value="P:cuticle development involved in collagen and cuticulin-based cuticle molting cycle"/>
    <property type="evidence" value="ECO:0000315"/>
    <property type="project" value="WormBase"/>
</dbReference>
<dbReference type="InterPro" id="IPR002486">
    <property type="entry name" value="Col_cuticle_N"/>
</dbReference>
<dbReference type="PANTHER" id="PTHR24637">
    <property type="entry name" value="COLLAGEN"/>
    <property type="match status" value="1"/>
</dbReference>
<dbReference type="PANTHER" id="PTHR24637:SF282">
    <property type="entry name" value="CUTICLE COLLAGEN SQT-1"/>
    <property type="match status" value="1"/>
</dbReference>
<dbReference type="Pfam" id="PF01484">
    <property type="entry name" value="Col_cuticle_N"/>
    <property type="match status" value="1"/>
</dbReference>
<dbReference type="SMART" id="SM01088">
    <property type="entry name" value="Col_cuticle_N"/>
    <property type="match status" value="1"/>
</dbReference>
<keyword id="KW-0176">Collagen</keyword>
<keyword id="KW-0193">Cuticle</keyword>
<keyword id="KW-1015">Disulfide bond</keyword>
<keyword id="KW-1185">Reference proteome</keyword>
<keyword id="KW-0677">Repeat</keyword>
<protein>
    <recommendedName>
        <fullName>Cuticle collagen sqt-1</fullName>
    </recommendedName>
    <alternativeName>
        <fullName>Protein roller-5</fullName>
    </alternativeName>
    <alternativeName>
        <fullName>Protein squat-1</fullName>
    </alternativeName>
</protein>
<comment type="function">
    <text>Nematode cuticles are composed largely of collagen-like proteins. The cuticle functions both as an exoskeleton and as a barrier to protect the worm from its environment. This is a collagen critical for organismal morphogenesis. Mutations in sqt-1 can lengthen, shorten, or helically twist the entire animal.</text>
</comment>
<comment type="subunit">
    <text>Collagen polypeptide chains are complexed within the cuticle by disulfide bonds and other types of covalent cross-links.</text>
</comment>
<comment type="similarity">
    <text evidence="2">Belongs to the cuticular collagen family.</text>
</comment>